<gene>
    <name evidence="1" type="primary">hisG</name>
    <name type="ordered locus">NP_1062A</name>
</gene>
<accession>Q3ITB2</accession>
<evidence type="ECO:0000255" key="1">
    <source>
        <dbReference type="HAMAP-Rule" id="MF_00079"/>
    </source>
</evidence>
<proteinExistence type="inferred from homology"/>
<protein>
    <recommendedName>
        <fullName evidence="1">ATP phosphoribosyltransferase</fullName>
        <shortName evidence="1">ATP-PRT</shortName>
        <shortName evidence="1">ATP-PRTase</shortName>
        <ecNumber evidence="1">2.4.2.17</ecNumber>
    </recommendedName>
</protein>
<feature type="chain" id="PRO_1000004480" description="ATP phosphoribosyltransferase">
    <location>
        <begin position="1"/>
        <end position="281"/>
    </location>
</feature>
<sequence>MRIAVPNKGRLHEPALELLERAGLHVQDGSDRKLYADTVDPEVSVLFARAADIPEYVADGAAALGITGLDQERESETDLVDLLDLEFGSCRLVLASPEDGGVSAPEELSGGTVATEFPKITERYFEELGVRPDIVEVSGATELTPHVDIADAIVDITSTGTTLRMNRLEVVDEVLESSVRLFADPAVADDPKVEQVTTAFRSVLDADGKRYLMMNVPEDSLDAVEAEIPGMGGPTVMDVAGQDTVAVHVVVDEREVFEVIPKLKAAGATDILVTEIERLVP</sequence>
<name>HIS1_NATPD</name>
<organism>
    <name type="scientific">Natronomonas pharaonis (strain ATCC 35678 / DSM 2160 / CIP 103997 / JCM 8858 / NBRC 14720 / NCIMB 2260 / Gabara)</name>
    <name type="common">Halobacterium pharaonis</name>
    <dbReference type="NCBI Taxonomy" id="348780"/>
    <lineage>
        <taxon>Archaea</taxon>
        <taxon>Methanobacteriati</taxon>
        <taxon>Methanobacteriota</taxon>
        <taxon>Stenosarchaea group</taxon>
        <taxon>Halobacteria</taxon>
        <taxon>Halobacteriales</taxon>
        <taxon>Haloarculaceae</taxon>
        <taxon>Natronomonas</taxon>
    </lineage>
</organism>
<reference key="1">
    <citation type="journal article" date="2005" name="Genome Res.">
        <title>Living with two extremes: conclusions from the genome sequence of Natronomonas pharaonis.</title>
        <authorList>
            <person name="Falb M."/>
            <person name="Pfeiffer F."/>
            <person name="Palm P."/>
            <person name="Rodewald K."/>
            <person name="Hickmann V."/>
            <person name="Tittor J."/>
            <person name="Oesterhelt D."/>
        </authorList>
    </citation>
    <scope>NUCLEOTIDE SEQUENCE [LARGE SCALE GENOMIC DNA]</scope>
    <source>
        <strain>ATCC 35678 / DSM 2160 / CIP 103997 / JCM 8858 / NBRC 14720 / NCIMB 2260 / Gabara</strain>
    </source>
</reference>
<comment type="function">
    <text evidence="1">Catalyzes the condensation of ATP and 5-phosphoribose 1-diphosphate to form N'-(5'-phosphoribosyl)-ATP (PR-ATP). Has a crucial role in the pathway because the rate of histidine biosynthesis seems to be controlled primarily by regulation of HisG enzymatic activity.</text>
</comment>
<comment type="catalytic activity">
    <reaction evidence="1">
        <text>1-(5-phospho-beta-D-ribosyl)-ATP + diphosphate = 5-phospho-alpha-D-ribose 1-diphosphate + ATP</text>
        <dbReference type="Rhea" id="RHEA:18473"/>
        <dbReference type="ChEBI" id="CHEBI:30616"/>
        <dbReference type="ChEBI" id="CHEBI:33019"/>
        <dbReference type="ChEBI" id="CHEBI:58017"/>
        <dbReference type="ChEBI" id="CHEBI:73183"/>
        <dbReference type="EC" id="2.4.2.17"/>
    </reaction>
</comment>
<comment type="cofactor">
    <cofactor evidence="1">
        <name>Mg(2+)</name>
        <dbReference type="ChEBI" id="CHEBI:18420"/>
    </cofactor>
</comment>
<comment type="activity regulation">
    <text evidence="1">Feedback inhibited by histidine.</text>
</comment>
<comment type="pathway">
    <text evidence="1">Amino-acid biosynthesis; L-histidine biosynthesis; L-histidine from 5-phospho-alpha-D-ribose 1-diphosphate: step 1/9.</text>
</comment>
<comment type="subcellular location">
    <subcellularLocation>
        <location evidence="1">Cytoplasm</location>
    </subcellularLocation>
</comment>
<comment type="similarity">
    <text evidence="1">Belongs to the ATP phosphoribosyltransferase family. Long subfamily.</text>
</comment>
<keyword id="KW-0028">Amino-acid biosynthesis</keyword>
<keyword id="KW-0067">ATP-binding</keyword>
<keyword id="KW-0963">Cytoplasm</keyword>
<keyword id="KW-0328">Glycosyltransferase</keyword>
<keyword id="KW-0368">Histidine biosynthesis</keyword>
<keyword id="KW-0460">Magnesium</keyword>
<keyword id="KW-0479">Metal-binding</keyword>
<keyword id="KW-0547">Nucleotide-binding</keyword>
<keyword id="KW-1185">Reference proteome</keyword>
<keyword id="KW-0808">Transferase</keyword>
<dbReference type="EC" id="2.4.2.17" evidence="1"/>
<dbReference type="EMBL" id="CR936257">
    <property type="protein sequence ID" value="CAI48622.1"/>
    <property type="molecule type" value="Genomic_DNA"/>
</dbReference>
<dbReference type="RefSeq" id="WP_011322258.1">
    <property type="nucleotide sequence ID" value="NC_007426.1"/>
</dbReference>
<dbReference type="SMR" id="Q3ITB2"/>
<dbReference type="STRING" id="348780.NP_1062A"/>
<dbReference type="EnsemblBacteria" id="CAI48622">
    <property type="protein sequence ID" value="CAI48622"/>
    <property type="gene ID" value="NP_1062A"/>
</dbReference>
<dbReference type="GeneID" id="3702820"/>
<dbReference type="KEGG" id="nph:NP_1062A"/>
<dbReference type="eggNOG" id="arCOG02208">
    <property type="taxonomic scope" value="Archaea"/>
</dbReference>
<dbReference type="HOGENOM" id="CLU_038115_1_1_2"/>
<dbReference type="OrthoDB" id="33116at2157"/>
<dbReference type="UniPathway" id="UPA00031">
    <property type="reaction ID" value="UER00006"/>
</dbReference>
<dbReference type="Proteomes" id="UP000002698">
    <property type="component" value="Chromosome"/>
</dbReference>
<dbReference type="GO" id="GO:0005737">
    <property type="term" value="C:cytoplasm"/>
    <property type="evidence" value="ECO:0007669"/>
    <property type="project" value="UniProtKB-SubCell"/>
</dbReference>
<dbReference type="GO" id="GO:0005524">
    <property type="term" value="F:ATP binding"/>
    <property type="evidence" value="ECO:0007669"/>
    <property type="project" value="UniProtKB-KW"/>
</dbReference>
<dbReference type="GO" id="GO:0003879">
    <property type="term" value="F:ATP phosphoribosyltransferase activity"/>
    <property type="evidence" value="ECO:0007669"/>
    <property type="project" value="UniProtKB-UniRule"/>
</dbReference>
<dbReference type="GO" id="GO:0000287">
    <property type="term" value="F:magnesium ion binding"/>
    <property type="evidence" value="ECO:0007669"/>
    <property type="project" value="UniProtKB-UniRule"/>
</dbReference>
<dbReference type="GO" id="GO:0000105">
    <property type="term" value="P:L-histidine biosynthetic process"/>
    <property type="evidence" value="ECO:0007669"/>
    <property type="project" value="UniProtKB-UniRule"/>
</dbReference>
<dbReference type="FunFam" id="3.30.70.120:FF:000002">
    <property type="entry name" value="ATP phosphoribosyltransferase"/>
    <property type="match status" value="1"/>
</dbReference>
<dbReference type="FunFam" id="3.40.190.10:FF:000008">
    <property type="entry name" value="ATP phosphoribosyltransferase"/>
    <property type="match status" value="1"/>
</dbReference>
<dbReference type="Gene3D" id="3.30.70.120">
    <property type="match status" value="1"/>
</dbReference>
<dbReference type="Gene3D" id="3.40.190.10">
    <property type="entry name" value="Periplasmic binding protein-like II"/>
    <property type="match status" value="2"/>
</dbReference>
<dbReference type="HAMAP" id="MF_00079">
    <property type="entry name" value="HisG_Long"/>
    <property type="match status" value="1"/>
</dbReference>
<dbReference type="InterPro" id="IPR020621">
    <property type="entry name" value="ATP-PRT_HisG_long"/>
</dbReference>
<dbReference type="InterPro" id="IPR013820">
    <property type="entry name" value="ATP_PRibTrfase_cat"/>
</dbReference>
<dbReference type="InterPro" id="IPR018198">
    <property type="entry name" value="ATP_PRibTrfase_CS"/>
</dbReference>
<dbReference type="InterPro" id="IPR001348">
    <property type="entry name" value="ATP_PRibTrfase_HisG"/>
</dbReference>
<dbReference type="InterPro" id="IPR013115">
    <property type="entry name" value="HisG_C"/>
</dbReference>
<dbReference type="InterPro" id="IPR011322">
    <property type="entry name" value="N-reg_PII-like_a/b"/>
</dbReference>
<dbReference type="InterPro" id="IPR015867">
    <property type="entry name" value="N-reg_PII/ATP_PRibTrfase_C"/>
</dbReference>
<dbReference type="NCBIfam" id="TIGR00070">
    <property type="entry name" value="hisG"/>
    <property type="match status" value="1"/>
</dbReference>
<dbReference type="NCBIfam" id="TIGR03455">
    <property type="entry name" value="HisG_C-term"/>
    <property type="match status" value="1"/>
</dbReference>
<dbReference type="PANTHER" id="PTHR21403:SF10">
    <property type="entry name" value="ATP PHOSPHORIBOSYLTRANSFERASE"/>
    <property type="match status" value="1"/>
</dbReference>
<dbReference type="PANTHER" id="PTHR21403">
    <property type="entry name" value="ATP PHOSPHORIBOSYLTRANSFERASE ATP-PRTASE"/>
    <property type="match status" value="1"/>
</dbReference>
<dbReference type="Pfam" id="PF01634">
    <property type="entry name" value="HisG"/>
    <property type="match status" value="1"/>
</dbReference>
<dbReference type="Pfam" id="PF08029">
    <property type="entry name" value="HisG_C"/>
    <property type="match status" value="1"/>
</dbReference>
<dbReference type="SUPFAM" id="SSF54913">
    <property type="entry name" value="GlnB-like"/>
    <property type="match status" value="1"/>
</dbReference>
<dbReference type="SUPFAM" id="SSF53850">
    <property type="entry name" value="Periplasmic binding protein-like II"/>
    <property type="match status" value="1"/>
</dbReference>
<dbReference type="PROSITE" id="PS01316">
    <property type="entry name" value="ATP_P_PHORIBOSYLTR"/>
    <property type="match status" value="1"/>
</dbReference>